<proteinExistence type="inferred from homology"/>
<dbReference type="EC" id="5.2.1.8"/>
<dbReference type="EMBL" id="AAEY01000024">
    <property type="protein sequence ID" value="EAL20876.1"/>
    <property type="molecule type" value="Genomic_DNA"/>
</dbReference>
<dbReference type="RefSeq" id="XP_775523.1">
    <property type="nucleotide sequence ID" value="XM_770430.1"/>
</dbReference>
<dbReference type="SMR" id="P0CP97"/>
<dbReference type="GeneID" id="4936247"/>
<dbReference type="KEGG" id="cnb:CNBE2370"/>
<dbReference type="VEuPathDB" id="FungiDB:CNBE2370"/>
<dbReference type="HOGENOM" id="CLU_013615_8_2_1"/>
<dbReference type="OrthoDB" id="5085at5206"/>
<dbReference type="GO" id="GO:0005783">
    <property type="term" value="C:endoplasmic reticulum"/>
    <property type="evidence" value="ECO:0007669"/>
    <property type="project" value="UniProtKB-SubCell"/>
</dbReference>
<dbReference type="GO" id="GO:0003755">
    <property type="term" value="F:peptidyl-prolyl cis-trans isomerase activity"/>
    <property type="evidence" value="ECO:0007669"/>
    <property type="project" value="UniProtKB-KW"/>
</dbReference>
<dbReference type="GO" id="GO:0061077">
    <property type="term" value="P:chaperone-mediated protein folding"/>
    <property type="evidence" value="ECO:0007669"/>
    <property type="project" value="InterPro"/>
</dbReference>
<dbReference type="FunFam" id="3.10.50.40:FF:000006">
    <property type="entry name" value="Peptidyl-prolyl cis-trans isomerase"/>
    <property type="match status" value="1"/>
</dbReference>
<dbReference type="Gene3D" id="3.10.50.40">
    <property type="match status" value="1"/>
</dbReference>
<dbReference type="InterPro" id="IPR044609">
    <property type="entry name" value="FKBP2/11"/>
</dbReference>
<dbReference type="InterPro" id="IPR046357">
    <property type="entry name" value="PPIase_dom_sf"/>
</dbReference>
<dbReference type="InterPro" id="IPR001179">
    <property type="entry name" value="PPIase_FKBP_dom"/>
</dbReference>
<dbReference type="PANTHER" id="PTHR45779">
    <property type="entry name" value="PEPTIDYLPROLYL ISOMERASE"/>
    <property type="match status" value="1"/>
</dbReference>
<dbReference type="PANTHER" id="PTHR45779:SF7">
    <property type="entry name" value="PEPTIDYLPROLYL ISOMERASE"/>
    <property type="match status" value="1"/>
</dbReference>
<dbReference type="Pfam" id="PF00254">
    <property type="entry name" value="FKBP_C"/>
    <property type="match status" value="1"/>
</dbReference>
<dbReference type="SUPFAM" id="SSF54534">
    <property type="entry name" value="FKBP-like"/>
    <property type="match status" value="1"/>
</dbReference>
<dbReference type="PROSITE" id="PS50059">
    <property type="entry name" value="FKBP_PPIASE"/>
    <property type="match status" value="1"/>
</dbReference>
<keyword id="KW-0256">Endoplasmic reticulum</keyword>
<keyword id="KW-0413">Isomerase</keyword>
<keyword id="KW-0697">Rotamase</keyword>
<keyword id="KW-0732">Signal</keyword>
<accession>P0CP97</accession>
<accession>Q55SE5</accession>
<accession>Q5KGT9</accession>
<feature type="signal peptide" evidence="2">
    <location>
        <begin position="1"/>
        <end position="23"/>
    </location>
</feature>
<feature type="chain" id="PRO_0000410208" description="FK506-binding protein 2">
    <location>
        <begin position="24"/>
        <end position="141"/>
    </location>
</feature>
<feature type="domain" description="PPIase FKBP-type" evidence="3">
    <location>
        <begin position="45"/>
        <end position="134"/>
    </location>
</feature>
<name>FKBP2_CRYNB</name>
<evidence type="ECO:0000250" key="1"/>
<evidence type="ECO:0000255" key="2"/>
<evidence type="ECO:0000255" key="3">
    <source>
        <dbReference type="PROSITE-ProRule" id="PRU00277"/>
    </source>
</evidence>
<evidence type="ECO:0000305" key="4"/>
<protein>
    <recommendedName>
        <fullName>FK506-binding protein 2</fullName>
        <ecNumber>5.2.1.8</ecNumber>
    </recommendedName>
    <alternativeName>
        <fullName>Peptidyl-prolyl cis-trans isomerase</fullName>
        <shortName>PPIase</shortName>
    </alternativeName>
    <alternativeName>
        <fullName>Rotamase</fullName>
    </alternativeName>
</protein>
<sequence>MYHPKALIIALLFTLSLILAAKSAEQLQIGVKYVPEECPVKSRKGDRLSMHYTGTLAKDGSKFDSSLDRNRPFEFTLGAGQVIKGWDQGLLDMCISEKRKLTIPSHLAYGERGHPPVIPPQSTLVFEVELLGIKNRHVDEL</sequence>
<organism>
    <name type="scientific">Cryptococcus neoformans var. neoformans serotype D (strain B-3501A)</name>
    <name type="common">Filobasidiella neoformans</name>
    <dbReference type="NCBI Taxonomy" id="283643"/>
    <lineage>
        <taxon>Eukaryota</taxon>
        <taxon>Fungi</taxon>
        <taxon>Dikarya</taxon>
        <taxon>Basidiomycota</taxon>
        <taxon>Agaricomycotina</taxon>
        <taxon>Tremellomycetes</taxon>
        <taxon>Tremellales</taxon>
        <taxon>Cryptococcaceae</taxon>
        <taxon>Cryptococcus</taxon>
        <taxon>Cryptococcus neoformans species complex</taxon>
    </lineage>
</organism>
<comment type="function">
    <text evidence="1">PPIases accelerate the folding of proteins. It catalyzes the cis-trans isomerization of proline imidic peptide bonds in oligopeptides (By similarity).</text>
</comment>
<comment type="catalytic activity">
    <reaction>
        <text>[protein]-peptidylproline (omega=180) = [protein]-peptidylproline (omega=0)</text>
        <dbReference type="Rhea" id="RHEA:16237"/>
        <dbReference type="Rhea" id="RHEA-COMP:10747"/>
        <dbReference type="Rhea" id="RHEA-COMP:10748"/>
        <dbReference type="ChEBI" id="CHEBI:83833"/>
        <dbReference type="ChEBI" id="CHEBI:83834"/>
        <dbReference type="EC" id="5.2.1.8"/>
    </reaction>
</comment>
<comment type="activity regulation">
    <text evidence="1">Inhibited by both FK506 and rapamycin.</text>
</comment>
<comment type="subcellular location">
    <subcellularLocation>
        <location evidence="1">Endoplasmic reticulum</location>
    </subcellularLocation>
</comment>
<comment type="similarity">
    <text evidence="4">Belongs to the FKBP-type PPIase family. FKBP2 subfamily.</text>
</comment>
<gene>
    <name type="primary">FPR2</name>
    <name type="ordered locus">CNBE2370</name>
</gene>
<reference key="1">
    <citation type="journal article" date="2005" name="Science">
        <title>The genome of the basidiomycetous yeast and human pathogen Cryptococcus neoformans.</title>
        <authorList>
            <person name="Loftus B.J."/>
            <person name="Fung E."/>
            <person name="Roncaglia P."/>
            <person name="Rowley D."/>
            <person name="Amedeo P."/>
            <person name="Bruno D."/>
            <person name="Vamathevan J."/>
            <person name="Miranda M."/>
            <person name="Anderson I.J."/>
            <person name="Fraser J.A."/>
            <person name="Allen J.E."/>
            <person name="Bosdet I.E."/>
            <person name="Brent M.R."/>
            <person name="Chiu R."/>
            <person name="Doering T.L."/>
            <person name="Donlin M.J."/>
            <person name="D'Souza C.A."/>
            <person name="Fox D.S."/>
            <person name="Grinberg V."/>
            <person name="Fu J."/>
            <person name="Fukushima M."/>
            <person name="Haas B.J."/>
            <person name="Huang J.C."/>
            <person name="Janbon G."/>
            <person name="Jones S.J.M."/>
            <person name="Koo H.L."/>
            <person name="Krzywinski M.I."/>
            <person name="Kwon-Chung K.J."/>
            <person name="Lengeler K.B."/>
            <person name="Maiti R."/>
            <person name="Marra M.A."/>
            <person name="Marra R.E."/>
            <person name="Mathewson C.A."/>
            <person name="Mitchell T.G."/>
            <person name="Pertea M."/>
            <person name="Riggs F.R."/>
            <person name="Salzberg S.L."/>
            <person name="Schein J.E."/>
            <person name="Shvartsbeyn A."/>
            <person name="Shin H."/>
            <person name="Shumway M."/>
            <person name="Specht C.A."/>
            <person name="Suh B.B."/>
            <person name="Tenney A."/>
            <person name="Utterback T.R."/>
            <person name="Wickes B.L."/>
            <person name="Wortman J.R."/>
            <person name="Wye N.H."/>
            <person name="Kronstad J.W."/>
            <person name="Lodge J.K."/>
            <person name="Heitman J."/>
            <person name="Davis R.W."/>
            <person name="Fraser C.M."/>
            <person name="Hyman R.W."/>
        </authorList>
    </citation>
    <scope>NUCLEOTIDE SEQUENCE [LARGE SCALE GENOMIC DNA]</scope>
    <source>
        <strain>B-3501A</strain>
    </source>
</reference>